<name>RL3_STRA3</name>
<reference key="1">
    <citation type="journal article" date="2002" name="Mol. Microbiol.">
        <title>Genome sequence of Streptococcus agalactiae, a pathogen causing invasive neonatal disease.</title>
        <authorList>
            <person name="Glaser P."/>
            <person name="Rusniok C."/>
            <person name="Buchrieser C."/>
            <person name="Chevalier F."/>
            <person name="Frangeul L."/>
            <person name="Msadek T."/>
            <person name="Zouine M."/>
            <person name="Couve E."/>
            <person name="Lalioui L."/>
            <person name="Poyart C."/>
            <person name="Trieu-Cuot P."/>
            <person name="Kunst F."/>
        </authorList>
    </citation>
    <scope>NUCLEOTIDE SEQUENCE [LARGE SCALE GENOMIC DNA]</scope>
    <source>
        <strain>NEM316</strain>
    </source>
</reference>
<feature type="chain" id="PRO_0000077163" description="Large ribosomal subunit protein uL3">
    <location>
        <begin position="1"/>
        <end position="208"/>
    </location>
</feature>
<feature type="region of interest" description="Disordered" evidence="2">
    <location>
        <begin position="116"/>
        <end position="148"/>
    </location>
</feature>
<sequence length="208" mass="22426">MTKGILGKKVGMTQIFTESGEFIPVTVIEATPNVVLQVKTVETDGYEAVQVGFDDKREVLSNKPAKGHVAKANTAPKRFIREFKNIEGLEVGAELSVEQFEAGDVVDVTGTSKGKGFQGVIKRHGQSRGPMAHGSRYHRRPGSMGPVAPNRVFKNKRLAGRMGGNRVTVQNLEIVQVIPEKNVVLIKGNVPGAKKSLITIKSAVKAAK</sequence>
<protein>
    <recommendedName>
        <fullName evidence="1">Large ribosomal subunit protein uL3</fullName>
    </recommendedName>
    <alternativeName>
        <fullName evidence="3">50S ribosomal protein L3</fullName>
    </alternativeName>
</protein>
<evidence type="ECO:0000255" key="1">
    <source>
        <dbReference type="HAMAP-Rule" id="MF_01325"/>
    </source>
</evidence>
<evidence type="ECO:0000256" key="2">
    <source>
        <dbReference type="SAM" id="MobiDB-lite"/>
    </source>
</evidence>
<evidence type="ECO:0000305" key="3"/>
<proteinExistence type="inferred from homology"/>
<keyword id="KW-0687">Ribonucleoprotein</keyword>
<keyword id="KW-0689">Ribosomal protein</keyword>
<keyword id="KW-0694">RNA-binding</keyword>
<keyword id="KW-0699">rRNA-binding</keyword>
<organism>
    <name type="scientific">Streptococcus agalactiae serotype III (strain NEM316)</name>
    <dbReference type="NCBI Taxonomy" id="211110"/>
    <lineage>
        <taxon>Bacteria</taxon>
        <taxon>Bacillati</taxon>
        <taxon>Bacillota</taxon>
        <taxon>Bacilli</taxon>
        <taxon>Lactobacillales</taxon>
        <taxon>Streptococcaceae</taxon>
        <taxon>Streptococcus</taxon>
    </lineage>
</organism>
<dbReference type="EMBL" id="AL766843">
    <property type="protein sequence ID" value="CAD45703.1"/>
    <property type="molecule type" value="Genomic_DNA"/>
</dbReference>
<dbReference type="RefSeq" id="WP_000160205.1">
    <property type="nucleotide sequence ID" value="NC_004368.1"/>
</dbReference>
<dbReference type="SMR" id="Q8E7T8"/>
<dbReference type="GeneID" id="66885018"/>
<dbReference type="KEGG" id="san:rplC"/>
<dbReference type="eggNOG" id="COG0087">
    <property type="taxonomic scope" value="Bacteria"/>
</dbReference>
<dbReference type="HOGENOM" id="CLU_044142_4_1_9"/>
<dbReference type="Proteomes" id="UP000000823">
    <property type="component" value="Chromosome"/>
</dbReference>
<dbReference type="GO" id="GO:0022625">
    <property type="term" value="C:cytosolic large ribosomal subunit"/>
    <property type="evidence" value="ECO:0007669"/>
    <property type="project" value="TreeGrafter"/>
</dbReference>
<dbReference type="GO" id="GO:0019843">
    <property type="term" value="F:rRNA binding"/>
    <property type="evidence" value="ECO:0007669"/>
    <property type="project" value="UniProtKB-UniRule"/>
</dbReference>
<dbReference type="GO" id="GO:0003735">
    <property type="term" value="F:structural constituent of ribosome"/>
    <property type="evidence" value="ECO:0007669"/>
    <property type="project" value="InterPro"/>
</dbReference>
<dbReference type="GO" id="GO:0006412">
    <property type="term" value="P:translation"/>
    <property type="evidence" value="ECO:0007669"/>
    <property type="project" value="UniProtKB-UniRule"/>
</dbReference>
<dbReference type="FunFam" id="2.40.30.10:FF:000004">
    <property type="entry name" value="50S ribosomal protein L3"/>
    <property type="match status" value="1"/>
</dbReference>
<dbReference type="FunFam" id="3.30.160.810:FF:000002">
    <property type="entry name" value="50S ribosomal protein L3"/>
    <property type="match status" value="1"/>
</dbReference>
<dbReference type="Gene3D" id="3.30.160.810">
    <property type="match status" value="1"/>
</dbReference>
<dbReference type="Gene3D" id="2.40.30.10">
    <property type="entry name" value="Translation factors"/>
    <property type="match status" value="1"/>
</dbReference>
<dbReference type="HAMAP" id="MF_01325_B">
    <property type="entry name" value="Ribosomal_uL3_B"/>
    <property type="match status" value="1"/>
</dbReference>
<dbReference type="InterPro" id="IPR000597">
    <property type="entry name" value="Ribosomal_uL3"/>
</dbReference>
<dbReference type="InterPro" id="IPR019927">
    <property type="entry name" value="Ribosomal_uL3_bac/org-type"/>
</dbReference>
<dbReference type="InterPro" id="IPR019926">
    <property type="entry name" value="Ribosomal_uL3_CS"/>
</dbReference>
<dbReference type="InterPro" id="IPR009000">
    <property type="entry name" value="Transl_B-barrel_sf"/>
</dbReference>
<dbReference type="NCBIfam" id="TIGR03625">
    <property type="entry name" value="L3_bact"/>
    <property type="match status" value="1"/>
</dbReference>
<dbReference type="PANTHER" id="PTHR11229">
    <property type="entry name" value="50S RIBOSOMAL PROTEIN L3"/>
    <property type="match status" value="1"/>
</dbReference>
<dbReference type="PANTHER" id="PTHR11229:SF16">
    <property type="entry name" value="LARGE RIBOSOMAL SUBUNIT PROTEIN UL3C"/>
    <property type="match status" value="1"/>
</dbReference>
<dbReference type="Pfam" id="PF00297">
    <property type="entry name" value="Ribosomal_L3"/>
    <property type="match status" value="1"/>
</dbReference>
<dbReference type="SUPFAM" id="SSF50447">
    <property type="entry name" value="Translation proteins"/>
    <property type="match status" value="1"/>
</dbReference>
<dbReference type="PROSITE" id="PS00474">
    <property type="entry name" value="RIBOSOMAL_L3"/>
    <property type="match status" value="1"/>
</dbReference>
<comment type="function">
    <text evidence="1">One of the primary rRNA binding proteins, it binds directly near the 3'-end of the 23S rRNA, where it nucleates assembly of the 50S subunit.</text>
</comment>
<comment type="subunit">
    <text evidence="1">Part of the 50S ribosomal subunit. Forms a cluster with proteins L14 and L19.</text>
</comment>
<comment type="similarity">
    <text evidence="1">Belongs to the universal ribosomal protein uL3 family.</text>
</comment>
<gene>
    <name evidence="1" type="primary">rplC</name>
    <name type="ordered locus">gbs0058</name>
</gene>
<accession>Q8E7T8</accession>